<evidence type="ECO:0000255" key="1">
    <source>
        <dbReference type="HAMAP-Rule" id="MF_00215"/>
    </source>
</evidence>
<keyword id="KW-0067">ATP-binding</keyword>
<keyword id="KW-0173">Coenzyme A biosynthesis</keyword>
<keyword id="KW-0963">Cytoplasm</keyword>
<keyword id="KW-0418">Kinase</keyword>
<keyword id="KW-0547">Nucleotide-binding</keyword>
<keyword id="KW-0808">Transferase</keyword>
<dbReference type="EC" id="2.7.1.33" evidence="1"/>
<dbReference type="EMBL" id="AM408590">
    <property type="protein sequence ID" value="CAL71139.1"/>
    <property type="molecule type" value="Genomic_DNA"/>
</dbReference>
<dbReference type="RefSeq" id="WP_003405790.1">
    <property type="nucleotide sequence ID" value="NC_008769.1"/>
</dbReference>
<dbReference type="SMR" id="A1KHN2"/>
<dbReference type="GeneID" id="45425066"/>
<dbReference type="KEGG" id="mbb:BCG_1152c"/>
<dbReference type="HOGENOM" id="CLU_053818_1_1_11"/>
<dbReference type="UniPathway" id="UPA00241">
    <property type="reaction ID" value="UER00352"/>
</dbReference>
<dbReference type="Proteomes" id="UP000001472">
    <property type="component" value="Chromosome"/>
</dbReference>
<dbReference type="GO" id="GO:0005737">
    <property type="term" value="C:cytoplasm"/>
    <property type="evidence" value="ECO:0007669"/>
    <property type="project" value="UniProtKB-SubCell"/>
</dbReference>
<dbReference type="GO" id="GO:0005524">
    <property type="term" value="F:ATP binding"/>
    <property type="evidence" value="ECO:0007669"/>
    <property type="project" value="UniProtKB-UniRule"/>
</dbReference>
<dbReference type="GO" id="GO:0004594">
    <property type="term" value="F:pantothenate kinase activity"/>
    <property type="evidence" value="ECO:0007669"/>
    <property type="project" value="UniProtKB-UniRule"/>
</dbReference>
<dbReference type="GO" id="GO:0015937">
    <property type="term" value="P:coenzyme A biosynthetic process"/>
    <property type="evidence" value="ECO:0007669"/>
    <property type="project" value="UniProtKB-UniRule"/>
</dbReference>
<dbReference type="CDD" id="cd02025">
    <property type="entry name" value="PanK"/>
    <property type="match status" value="1"/>
</dbReference>
<dbReference type="FunFam" id="3.40.50.300:FF:000242">
    <property type="entry name" value="Pantothenate kinase"/>
    <property type="match status" value="1"/>
</dbReference>
<dbReference type="Gene3D" id="3.40.50.300">
    <property type="entry name" value="P-loop containing nucleotide triphosphate hydrolases"/>
    <property type="match status" value="1"/>
</dbReference>
<dbReference type="HAMAP" id="MF_00215">
    <property type="entry name" value="Pantothen_kinase_1"/>
    <property type="match status" value="1"/>
</dbReference>
<dbReference type="InterPro" id="IPR027417">
    <property type="entry name" value="P-loop_NTPase"/>
</dbReference>
<dbReference type="InterPro" id="IPR004566">
    <property type="entry name" value="PanK"/>
</dbReference>
<dbReference type="InterPro" id="IPR006083">
    <property type="entry name" value="PRK/URK"/>
</dbReference>
<dbReference type="NCBIfam" id="TIGR00554">
    <property type="entry name" value="panK_bact"/>
    <property type="match status" value="1"/>
</dbReference>
<dbReference type="PANTHER" id="PTHR10285">
    <property type="entry name" value="URIDINE KINASE"/>
    <property type="match status" value="1"/>
</dbReference>
<dbReference type="Pfam" id="PF00485">
    <property type="entry name" value="PRK"/>
    <property type="match status" value="1"/>
</dbReference>
<dbReference type="PIRSF" id="PIRSF000545">
    <property type="entry name" value="Pantothenate_kin"/>
    <property type="match status" value="1"/>
</dbReference>
<dbReference type="SUPFAM" id="SSF52540">
    <property type="entry name" value="P-loop containing nucleoside triphosphate hydrolases"/>
    <property type="match status" value="1"/>
</dbReference>
<reference key="1">
    <citation type="journal article" date="2007" name="Proc. Natl. Acad. Sci. U.S.A.">
        <title>Genome plasticity of BCG and impact on vaccine efficacy.</title>
        <authorList>
            <person name="Brosch R."/>
            <person name="Gordon S.V."/>
            <person name="Garnier T."/>
            <person name="Eiglmeier K."/>
            <person name="Frigui W."/>
            <person name="Valenti P."/>
            <person name="Dos Santos S."/>
            <person name="Duthoy S."/>
            <person name="Lacroix C."/>
            <person name="Garcia-Pelayo C."/>
            <person name="Inwald J.K."/>
            <person name="Golby P."/>
            <person name="Garcia J.N."/>
            <person name="Hewinson R.G."/>
            <person name="Behr M.A."/>
            <person name="Quail M.A."/>
            <person name="Churcher C."/>
            <person name="Barrell B.G."/>
            <person name="Parkhill J."/>
            <person name="Cole S.T."/>
        </authorList>
    </citation>
    <scope>NUCLEOTIDE SEQUENCE [LARGE SCALE GENOMIC DNA]</scope>
    <source>
        <strain>BCG / Pasteur 1173P2</strain>
    </source>
</reference>
<proteinExistence type="inferred from homology"/>
<protein>
    <recommendedName>
        <fullName evidence="1">Pantothenate kinase</fullName>
        <ecNumber evidence="1">2.7.1.33</ecNumber>
    </recommendedName>
    <alternativeName>
        <fullName evidence="1">Pantothenic acid kinase</fullName>
    </alternativeName>
</protein>
<comment type="catalytic activity">
    <reaction evidence="1">
        <text>(R)-pantothenate + ATP = (R)-4'-phosphopantothenate + ADP + H(+)</text>
        <dbReference type="Rhea" id="RHEA:16373"/>
        <dbReference type="ChEBI" id="CHEBI:10986"/>
        <dbReference type="ChEBI" id="CHEBI:15378"/>
        <dbReference type="ChEBI" id="CHEBI:29032"/>
        <dbReference type="ChEBI" id="CHEBI:30616"/>
        <dbReference type="ChEBI" id="CHEBI:456216"/>
        <dbReference type="EC" id="2.7.1.33"/>
    </reaction>
</comment>
<comment type="pathway">
    <text evidence="1">Cofactor biosynthesis; coenzyme A biosynthesis; CoA from (R)-pantothenate: step 1/5.</text>
</comment>
<comment type="subcellular location">
    <subcellularLocation>
        <location evidence="1">Cytoplasm</location>
    </subcellularLocation>
</comment>
<comment type="similarity">
    <text evidence="1">Belongs to the prokaryotic pantothenate kinase family.</text>
</comment>
<accession>A1KHN2</accession>
<gene>
    <name evidence="1" type="primary">coaA</name>
    <name type="ordered locus">BCG_1152c</name>
</gene>
<feature type="chain" id="PRO_1000043226" description="Pantothenate kinase">
    <location>
        <begin position="1"/>
        <end position="312"/>
    </location>
</feature>
<feature type="binding site" evidence="1">
    <location>
        <begin position="97"/>
        <end position="104"/>
    </location>
    <ligand>
        <name>ATP</name>
        <dbReference type="ChEBI" id="CHEBI:30616"/>
    </ligand>
</feature>
<sequence>MSRLSEPSPYVEFDRRQWRALRMSTPLALTEEELVGLRGLGEQIDLLEVEEVYLPLARLIHLQVAARQRLFAATAEFLGEPQQNPDRPVPFIIGVAGSVAVGKSTTARVLQALLARWDHHPRVDLVTTDGFLYPNAELQRRNLMHRKGFPESYNRRALMRFVTSVKSGSDYACAPVYSHLHYDIIPGAEQVVRHPDILILEGLNVLQTGPTLMVSDLFDFSLYVDARIEDIEQWYVSRFLAMRTTAFADPESHFHHYAAFSDSQAVVAAREIWRTINRPNLVENILPTRPRATLVLRKDADHSINRLRLRKL</sequence>
<name>COAA_MYCBP</name>
<organism>
    <name type="scientific">Mycobacterium bovis (strain BCG / Pasteur 1173P2)</name>
    <dbReference type="NCBI Taxonomy" id="410289"/>
    <lineage>
        <taxon>Bacteria</taxon>
        <taxon>Bacillati</taxon>
        <taxon>Actinomycetota</taxon>
        <taxon>Actinomycetes</taxon>
        <taxon>Mycobacteriales</taxon>
        <taxon>Mycobacteriaceae</taxon>
        <taxon>Mycobacterium</taxon>
        <taxon>Mycobacterium tuberculosis complex</taxon>
    </lineage>
</organism>